<accession>A4YNK7</accession>
<protein>
    <recommendedName>
        <fullName evidence="1">Histidine ammonia-lyase</fullName>
        <shortName evidence="1">Histidase</shortName>
        <ecNumber evidence="1">4.3.1.3</ecNumber>
    </recommendedName>
</protein>
<proteinExistence type="inferred from homology"/>
<name>HUTH_BRASO</name>
<organism>
    <name type="scientific">Bradyrhizobium sp. (strain ORS 278)</name>
    <dbReference type="NCBI Taxonomy" id="114615"/>
    <lineage>
        <taxon>Bacteria</taxon>
        <taxon>Pseudomonadati</taxon>
        <taxon>Pseudomonadota</taxon>
        <taxon>Alphaproteobacteria</taxon>
        <taxon>Hyphomicrobiales</taxon>
        <taxon>Nitrobacteraceae</taxon>
        <taxon>Bradyrhizobium</taxon>
    </lineage>
</organism>
<dbReference type="EC" id="4.3.1.3" evidence="1"/>
<dbReference type="EMBL" id="CU234118">
    <property type="protein sequence ID" value="CAL75483.1"/>
    <property type="molecule type" value="Genomic_DNA"/>
</dbReference>
<dbReference type="RefSeq" id="WP_011924714.1">
    <property type="nucleotide sequence ID" value="NC_009445.1"/>
</dbReference>
<dbReference type="SMR" id="A4YNK7"/>
<dbReference type="STRING" id="114615.BRADO1604"/>
<dbReference type="KEGG" id="bra:BRADO1604"/>
<dbReference type="eggNOG" id="COG2986">
    <property type="taxonomic scope" value="Bacteria"/>
</dbReference>
<dbReference type="HOGENOM" id="CLU_014801_4_0_5"/>
<dbReference type="OrthoDB" id="9806955at2"/>
<dbReference type="UniPathway" id="UPA00379">
    <property type="reaction ID" value="UER00549"/>
</dbReference>
<dbReference type="Proteomes" id="UP000001994">
    <property type="component" value="Chromosome"/>
</dbReference>
<dbReference type="GO" id="GO:0005737">
    <property type="term" value="C:cytoplasm"/>
    <property type="evidence" value="ECO:0007669"/>
    <property type="project" value="UniProtKB-SubCell"/>
</dbReference>
<dbReference type="GO" id="GO:0004397">
    <property type="term" value="F:histidine ammonia-lyase activity"/>
    <property type="evidence" value="ECO:0007669"/>
    <property type="project" value="UniProtKB-UniRule"/>
</dbReference>
<dbReference type="GO" id="GO:0019556">
    <property type="term" value="P:L-histidine catabolic process to glutamate and formamide"/>
    <property type="evidence" value="ECO:0007669"/>
    <property type="project" value="UniProtKB-UniPathway"/>
</dbReference>
<dbReference type="GO" id="GO:0019557">
    <property type="term" value="P:L-histidine catabolic process to glutamate and formate"/>
    <property type="evidence" value="ECO:0007669"/>
    <property type="project" value="UniProtKB-UniPathway"/>
</dbReference>
<dbReference type="CDD" id="cd00332">
    <property type="entry name" value="PAL-HAL"/>
    <property type="match status" value="1"/>
</dbReference>
<dbReference type="FunFam" id="1.10.275.10:FF:000005">
    <property type="entry name" value="Histidine ammonia-lyase"/>
    <property type="match status" value="1"/>
</dbReference>
<dbReference type="FunFam" id="1.20.200.10:FF:000003">
    <property type="entry name" value="Histidine ammonia-lyase"/>
    <property type="match status" value="1"/>
</dbReference>
<dbReference type="Gene3D" id="1.20.200.10">
    <property type="entry name" value="Fumarase/aspartase (Central domain)"/>
    <property type="match status" value="1"/>
</dbReference>
<dbReference type="Gene3D" id="1.10.275.10">
    <property type="entry name" value="Fumarase/aspartase (N-terminal domain)"/>
    <property type="match status" value="1"/>
</dbReference>
<dbReference type="HAMAP" id="MF_00229">
    <property type="entry name" value="His_ammonia_lyase"/>
    <property type="match status" value="1"/>
</dbReference>
<dbReference type="InterPro" id="IPR001106">
    <property type="entry name" value="Aromatic_Lyase"/>
</dbReference>
<dbReference type="InterPro" id="IPR024083">
    <property type="entry name" value="Fumarase/histidase_N"/>
</dbReference>
<dbReference type="InterPro" id="IPR005921">
    <property type="entry name" value="HutH"/>
</dbReference>
<dbReference type="InterPro" id="IPR008948">
    <property type="entry name" value="L-Aspartase-like"/>
</dbReference>
<dbReference type="InterPro" id="IPR022313">
    <property type="entry name" value="Phe/His_NH3-lyase_AS"/>
</dbReference>
<dbReference type="NCBIfam" id="TIGR01225">
    <property type="entry name" value="hutH"/>
    <property type="match status" value="1"/>
</dbReference>
<dbReference type="NCBIfam" id="NF006871">
    <property type="entry name" value="PRK09367.1"/>
    <property type="match status" value="1"/>
</dbReference>
<dbReference type="PANTHER" id="PTHR10362">
    <property type="entry name" value="HISTIDINE AMMONIA-LYASE"/>
    <property type="match status" value="1"/>
</dbReference>
<dbReference type="Pfam" id="PF00221">
    <property type="entry name" value="Lyase_aromatic"/>
    <property type="match status" value="1"/>
</dbReference>
<dbReference type="SUPFAM" id="SSF48557">
    <property type="entry name" value="L-aspartase-like"/>
    <property type="match status" value="1"/>
</dbReference>
<dbReference type="PROSITE" id="PS00488">
    <property type="entry name" value="PAL_HISTIDASE"/>
    <property type="match status" value="1"/>
</dbReference>
<evidence type="ECO:0000255" key="1">
    <source>
        <dbReference type="HAMAP-Rule" id="MF_00229"/>
    </source>
</evidence>
<reference key="1">
    <citation type="journal article" date="2007" name="Science">
        <title>Legumes symbioses: absence of nod genes in photosynthetic bradyrhizobia.</title>
        <authorList>
            <person name="Giraud E."/>
            <person name="Moulin L."/>
            <person name="Vallenet D."/>
            <person name="Barbe V."/>
            <person name="Cytryn E."/>
            <person name="Avarre J.-C."/>
            <person name="Jaubert M."/>
            <person name="Simon D."/>
            <person name="Cartieaux F."/>
            <person name="Prin Y."/>
            <person name="Bena G."/>
            <person name="Hannibal L."/>
            <person name="Fardoux J."/>
            <person name="Kojadinovic M."/>
            <person name="Vuillet L."/>
            <person name="Lajus A."/>
            <person name="Cruveiller S."/>
            <person name="Rouy Z."/>
            <person name="Mangenot S."/>
            <person name="Segurens B."/>
            <person name="Dossat C."/>
            <person name="Franck W.L."/>
            <person name="Chang W.-S."/>
            <person name="Saunders E."/>
            <person name="Bruce D."/>
            <person name="Richardson P."/>
            <person name="Normand P."/>
            <person name="Dreyfus B."/>
            <person name="Pignol D."/>
            <person name="Stacey G."/>
            <person name="Emerich D."/>
            <person name="Vermeglio A."/>
            <person name="Medigue C."/>
            <person name="Sadowsky M."/>
        </authorList>
    </citation>
    <scope>NUCLEOTIDE SEQUENCE [LARGE SCALE GENOMIC DNA]</scope>
    <source>
        <strain>ORS 278</strain>
    </source>
</reference>
<keyword id="KW-0963">Cytoplasm</keyword>
<keyword id="KW-0369">Histidine metabolism</keyword>
<keyword id="KW-0456">Lyase</keyword>
<keyword id="KW-1185">Reference proteome</keyword>
<feature type="chain" id="PRO_1000021544" description="Histidine ammonia-lyase">
    <location>
        <begin position="1"/>
        <end position="515"/>
    </location>
</feature>
<feature type="modified residue" description="2,3-didehydroalanine (Ser)" evidence="1">
    <location>
        <position position="143"/>
    </location>
</feature>
<feature type="cross-link" description="5-imidazolinone (Ala-Gly)" evidence="1">
    <location>
        <begin position="142"/>
        <end position="144"/>
    </location>
</feature>
<comment type="catalytic activity">
    <reaction evidence="1">
        <text>L-histidine = trans-urocanate + NH4(+)</text>
        <dbReference type="Rhea" id="RHEA:21232"/>
        <dbReference type="ChEBI" id="CHEBI:17771"/>
        <dbReference type="ChEBI" id="CHEBI:28938"/>
        <dbReference type="ChEBI" id="CHEBI:57595"/>
        <dbReference type="EC" id="4.3.1.3"/>
    </reaction>
</comment>
<comment type="pathway">
    <text evidence="1">Amino-acid degradation; L-histidine degradation into L-glutamate; N-formimidoyl-L-glutamate from L-histidine: step 1/3.</text>
</comment>
<comment type="subcellular location">
    <subcellularLocation>
        <location evidence="1">Cytoplasm</location>
    </subcellularLocation>
</comment>
<comment type="PTM">
    <text evidence="1">Contains an active site 4-methylidene-imidazol-5-one (MIO), which is formed autocatalytically by cyclization and dehydration of residues Ala-Ser-Gly.</text>
</comment>
<comment type="similarity">
    <text evidence="1">Belongs to the PAL/histidase family.</text>
</comment>
<gene>
    <name evidence="1" type="primary">hutH</name>
    <name type="ordered locus">BRADO1604</name>
</gene>
<sequence>MNAIIAEPGHVSFDDLARVYAGAAIALGPAYWPRVEAAAAIVAKAAQGAEPVYGINTGFGKLASKRIPPDQTALLQRNLILSHCCGVGPATPEPIVRLMIALKIISLGRGASGVRRQIVDQLQAMLAQGVCPFVPQQGSVGASGDLAPLAHMTAVMIGEGQAFVEGRLVPGREALAHVGLDPVTLGPKEGLALINGTQFSTAYALAGLFRARDLLNAALVTGALSVDAAMASTAPFRPEIQALRGHPGQIAAGRVLTELVDGSAIRLSHLEGDERVQDPYCLRCQPQVAGAALDLLTQAARTLVNEANAVTDNPLVLVETGEIISGGNFHAEPVAFAADQIALALSELGAISERRIATLVDPALNFGLPPFLTPQPGLNSGFMIAEVTAAALFAENKQRALPCSIDSTPTSANQEDHVSMAAHAARRLHDMADNLAHIIGIELLVAAQGIELRVPHGTSAALSAVIGALRSHVPALESDRYMADDLAKAAALVAGGALARAANVALGRDSFPRLG</sequence>